<proteinExistence type="inferred from homology"/>
<comment type="function">
    <text evidence="1">One of two assembly initiator proteins, it binds directly to the 5'-end of the 23S rRNA, where it nucleates assembly of the 50S subunit.</text>
</comment>
<comment type="function">
    <text evidence="1">One of the proteins that surrounds the polypeptide exit tunnel on the outside of the subunit.</text>
</comment>
<comment type="subunit">
    <text evidence="1">Part of the 50S ribosomal subunit.</text>
</comment>
<comment type="similarity">
    <text evidence="1">Belongs to the universal ribosomal protein uL24 family.</text>
</comment>
<evidence type="ECO:0000255" key="1">
    <source>
        <dbReference type="HAMAP-Rule" id="MF_01326"/>
    </source>
</evidence>
<evidence type="ECO:0000256" key="2">
    <source>
        <dbReference type="SAM" id="MobiDB-lite"/>
    </source>
</evidence>
<evidence type="ECO:0000305" key="3"/>
<dbReference type="EMBL" id="CP000096">
    <property type="protein sequence ID" value="ABB23080.1"/>
    <property type="molecule type" value="Genomic_DNA"/>
</dbReference>
<dbReference type="RefSeq" id="WP_011356956.1">
    <property type="nucleotide sequence ID" value="NC_007512.1"/>
</dbReference>
<dbReference type="SMR" id="Q3B6F1"/>
<dbReference type="STRING" id="319225.Plut_0192"/>
<dbReference type="KEGG" id="plt:Plut_0192"/>
<dbReference type="eggNOG" id="COG0198">
    <property type="taxonomic scope" value="Bacteria"/>
</dbReference>
<dbReference type="HOGENOM" id="CLU_093315_3_0_10"/>
<dbReference type="OrthoDB" id="9807419at2"/>
<dbReference type="Proteomes" id="UP000002709">
    <property type="component" value="Chromosome"/>
</dbReference>
<dbReference type="GO" id="GO:1990904">
    <property type="term" value="C:ribonucleoprotein complex"/>
    <property type="evidence" value="ECO:0007669"/>
    <property type="project" value="UniProtKB-KW"/>
</dbReference>
<dbReference type="GO" id="GO:0005840">
    <property type="term" value="C:ribosome"/>
    <property type="evidence" value="ECO:0007669"/>
    <property type="project" value="UniProtKB-KW"/>
</dbReference>
<dbReference type="GO" id="GO:0019843">
    <property type="term" value="F:rRNA binding"/>
    <property type="evidence" value="ECO:0007669"/>
    <property type="project" value="UniProtKB-UniRule"/>
</dbReference>
<dbReference type="GO" id="GO:0003735">
    <property type="term" value="F:structural constituent of ribosome"/>
    <property type="evidence" value="ECO:0007669"/>
    <property type="project" value="InterPro"/>
</dbReference>
<dbReference type="GO" id="GO:0006412">
    <property type="term" value="P:translation"/>
    <property type="evidence" value="ECO:0007669"/>
    <property type="project" value="UniProtKB-UniRule"/>
</dbReference>
<dbReference type="CDD" id="cd06089">
    <property type="entry name" value="KOW_RPL26"/>
    <property type="match status" value="1"/>
</dbReference>
<dbReference type="Gene3D" id="2.30.30.30">
    <property type="match status" value="1"/>
</dbReference>
<dbReference type="HAMAP" id="MF_01326_B">
    <property type="entry name" value="Ribosomal_uL24_B"/>
    <property type="match status" value="1"/>
</dbReference>
<dbReference type="InterPro" id="IPR005824">
    <property type="entry name" value="KOW"/>
</dbReference>
<dbReference type="InterPro" id="IPR014722">
    <property type="entry name" value="Rib_uL2_dom2"/>
</dbReference>
<dbReference type="InterPro" id="IPR003256">
    <property type="entry name" value="Ribosomal_uL24"/>
</dbReference>
<dbReference type="InterPro" id="IPR005825">
    <property type="entry name" value="Ribosomal_uL24_CS"/>
</dbReference>
<dbReference type="InterPro" id="IPR041988">
    <property type="entry name" value="Ribosomal_uL24_KOW"/>
</dbReference>
<dbReference type="InterPro" id="IPR008991">
    <property type="entry name" value="Translation_prot_SH3-like_sf"/>
</dbReference>
<dbReference type="NCBIfam" id="TIGR01079">
    <property type="entry name" value="rplX_bact"/>
    <property type="match status" value="1"/>
</dbReference>
<dbReference type="PANTHER" id="PTHR12903">
    <property type="entry name" value="MITOCHONDRIAL RIBOSOMAL PROTEIN L24"/>
    <property type="match status" value="1"/>
</dbReference>
<dbReference type="Pfam" id="PF00467">
    <property type="entry name" value="KOW"/>
    <property type="match status" value="1"/>
</dbReference>
<dbReference type="Pfam" id="PF17136">
    <property type="entry name" value="ribosomal_L24"/>
    <property type="match status" value="1"/>
</dbReference>
<dbReference type="SMART" id="SM00739">
    <property type="entry name" value="KOW"/>
    <property type="match status" value="1"/>
</dbReference>
<dbReference type="SUPFAM" id="SSF50104">
    <property type="entry name" value="Translation proteins SH3-like domain"/>
    <property type="match status" value="1"/>
</dbReference>
<dbReference type="PROSITE" id="PS01108">
    <property type="entry name" value="RIBOSOMAL_L24"/>
    <property type="match status" value="1"/>
</dbReference>
<gene>
    <name evidence="1" type="primary">rplX</name>
    <name type="ordered locus">Plut_0192</name>
</gene>
<reference key="1">
    <citation type="submission" date="2005-08" db="EMBL/GenBank/DDBJ databases">
        <title>Complete sequence of Pelodictyon luteolum DSM 273.</title>
        <authorList>
            <consortium name="US DOE Joint Genome Institute"/>
            <person name="Copeland A."/>
            <person name="Lucas S."/>
            <person name="Lapidus A."/>
            <person name="Barry K."/>
            <person name="Detter J.C."/>
            <person name="Glavina T."/>
            <person name="Hammon N."/>
            <person name="Israni S."/>
            <person name="Pitluck S."/>
            <person name="Bryant D."/>
            <person name="Schmutz J."/>
            <person name="Larimer F."/>
            <person name="Land M."/>
            <person name="Kyrpides N."/>
            <person name="Ivanova N."/>
            <person name="Richardson P."/>
        </authorList>
    </citation>
    <scope>NUCLEOTIDE SEQUENCE [LARGE SCALE GENOMIC DNA]</scope>
    <source>
        <strain>DSM 273 / BCRC 81028 / 2530</strain>
    </source>
</reference>
<protein>
    <recommendedName>
        <fullName evidence="1">Large ribosomal subunit protein uL24</fullName>
    </recommendedName>
    <alternativeName>
        <fullName evidence="3">50S ribosomal protein L24</fullName>
    </alternativeName>
</protein>
<organism>
    <name type="scientific">Chlorobium luteolum (strain DSM 273 / BCRC 81028 / 2530)</name>
    <name type="common">Pelodictyon luteolum</name>
    <dbReference type="NCBI Taxonomy" id="319225"/>
    <lineage>
        <taxon>Bacteria</taxon>
        <taxon>Pseudomonadati</taxon>
        <taxon>Chlorobiota</taxon>
        <taxon>Chlorobiia</taxon>
        <taxon>Chlorobiales</taxon>
        <taxon>Chlorobiaceae</taxon>
        <taxon>Chlorobium/Pelodictyon group</taxon>
        <taxon>Pelodictyon</taxon>
    </lineage>
</organism>
<keyword id="KW-1185">Reference proteome</keyword>
<keyword id="KW-0687">Ribonucleoprotein</keyword>
<keyword id="KW-0689">Ribosomal protein</keyword>
<keyword id="KW-0694">RNA-binding</keyword>
<keyword id="KW-0699">rRNA-binding</keyword>
<name>RL24_CHLL3</name>
<sequence length="80" mass="9100">MKTGLKRVKLHVKKNDMVVVLSGNDRGKSGKVLRVYPVKNRVIIEGVNIRKRHMRPTQSNPQGSIIEREFPIHASNVKKS</sequence>
<accession>Q3B6F1</accession>
<feature type="chain" id="PRO_0000241635" description="Large ribosomal subunit protein uL24">
    <location>
        <begin position="1"/>
        <end position="80"/>
    </location>
</feature>
<feature type="region of interest" description="Disordered" evidence="2">
    <location>
        <begin position="53"/>
        <end position="80"/>
    </location>
</feature>